<feature type="chain" id="PRO_0000321676" description="Rhomboid protease GlpG homolog">
    <location>
        <begin position="1"/>
        <end position="276"/>
    </location>
</feature>
<feature type="transmembrane region" description="Helical" evidence="2">
    <location>
        <begin position="94"/>
        <end position="114"/>
    </location>
</feature>
<feature type="transmembrane region" description="Helical" evidence="2">
    <location>
        <begin position="142"/>
        <end position="162"/>
    </location>
</feature>
<feature type="transmembrane region" description="Helical" evidence="2">
    <location>
        <begin position="168"/>
        <end position="188"/>
    </location>
</feature>
<feature type="transmembrane region" description="Helical" evidence="2">
    <location>
        <begin position="192"/>
        <end position="212"/>
    </location>
</feature>
<feature type="transmembrane region" description="Helical" evidence="2">
    <location>
        <begin position="225"/>
        <end position="245"/>
    </location>
</feature>
<feature type="transmembrane region" description="Helical" evidence="2">
    <location>
        <begin position="252"/>
        <end position="272"/>
    </location>
</feature>
<organism>
    <name type="scientific">Cronobacter sakazakii (strain ATCC BAA-894)</name>
    <name type="common">Enterobacter sakazakii</name>
    <dbReference type="NCBI Taxonomy" id="290339"/>
    <lineage>
        <taxon>Bacteria</taxon>
        <taxon>Pseudomonadati</taxon>
        <taxon>Pseudomonadota</taxon>
        <taxon>Gammaproteobacteria</taxon>
        <taxon>Enterobacterales</taxon>
        <taxon>Enterobacteriaceae</taxon>
        <taxon>Cronobacter</taxon>
    </lineage>
</organism>
<dbReference type="EMBL" id="CP000783">
    <property type="protein sequence ID" value="ABU79497.1"/>
    <property type="molecule type" value="Genomic_DNA"/>
</dbReference>
<dbReference type="RefSeq" id="WP_007899829.1">
    <property type="nucleotide sequence ID" value="NC_009778.1"/>
</dbReference>
<dbReference type="SMR" id="A7MGE5"/>
<dbReference type="GeneID" id="56732919"/>
<dbReference type="KEGG" id="esa:ESA_04318"/>
<dbReference type="HOGENOM" id="CLU_058989_0_0_6"/>
<dbReference type="Proteomes" id="UP000000260">
    <property type="component" value="Chromosome"/>
</dbReference>
<dbReference type="GO" id="GO:0005886">
    <property type="term" value="C:plasma membrane"/>
    <property type="evidence" value="ECO:0007669"/>
    <property type="project" value="UniProtKB-SubCell"/>
</dbReference>
<dbReference type="GO" id="GO:0004252">
    <property type="term" value="F:serine-type endopeptidase activity"/>
    <property type="evidence" value="ECO:0007669"/>
    <property type="project" value="InterPro"/>
</dbReference>
<dbReference type="GO" id="GO:0006508">
    <property type="term" value="P:proteolysis"/>
    <property type="evidence" value="ECO:0007669"/>
    <property type="project" value="InterPro"/>
</dbReference>
<dbReference type="Gene3D" id="3.30.70.2350">
    <property type="match status" value="1"/>
</dbReference>
<dbReference type="Gene3D" id="1.20.1540.10">
    <property type="entry name" value="Rhomboid-like"/>
    <property type="match status" value="1"/>
</dbReference>
<dbReference type="InterPro" id="IPR038236">
    <property type="entry name" value="GlpG_N_sf"/>
</dbReference>
<dbReference type="InterPro" id="IPR022732">
    <property type="entry name" value="Peptidase_S54_GlpG_N"/>
</dbReference>
<dbReference type="InterPro" id="IPR022764">
    <property type="entry name" value="Peptidase_S54_rhomboid_dom"/>
</dbReference>
<dbReference type="InterPro" id="IPR035952">
    <property type="entry name" value="Rhomboid-like_sf"/>
</dbReference>
<dbReference type="InterPro" id="IPR023662">
    <property type="entry name" value="Rhomboid_protease_GlpG"/>
</dbReference>
<dbReference type="NCBIfam" id="NF008155">
    <property type="entry name" value="PRK10907.1"/>
    <property type="match status" value="1"/>
</dbReference>
<dbReference type="NCBIfam" id="TIGR04239">
    <property type="entry name" value="rhombo_GlpG"/>
    <property type="match status" value="1"/>
</dbReference>
<dbReference type="PANTHER" id="PTHR43066:SF26">
    <property type="entry name" value="RHOMBOID PROTEASE GLPG"/>
    <property type="match status" value="1"/>
</dbReference>
<dbReference type="PANTHER" id="PTHR43066">
    <property type="entry name" value="RHOMBOID-RELATED PROTEIN"/>
    <property type="match status" value="1"/>
</dbReference>
<dbReference type="Pfam" id="PF01694">
    <property type="entry name" value="Rhomboid"/>
    <property type="match status" value="1"/>
</dbReference>
<dbReference type="Pfam" id="PF12122">
    <property type="entry name" value="Rhomboid_N"/>
    <property type="match status" value="1"/>
</dbReference>
<dbReference type="SUPFAM" id="SSF144091">
    <property type="entry name" value="Rhomboid-like"/>
    <property type="match status" value="1"/>
</dbReference>
<proteinExistence type="inferred from homology"/>
<comment type="subcellular location">
    <subcellularLocation>
        <location evidence="1">Cell inner membrane</location>
        <topology evidence="1">Multi-pass membrane protein</topology>
    </subcellularLocation>
</comment>
<comment type="similarity">
    <text evidence="3">Belongs to the peptidase S54 family.</text>
</comment>
<comment type="caution">
    <text evidence="3">Although strongly related to the peptidase S54 family, it lacks the conserved active sites, suggesting that it has no peptidase activity.</text>
</comment>
<gene>
    <name type="primary">glpG</name>
    <name type="ordered locus">ESA_04318</name>
</gene>
<protein>
    <recommendedName>
        <fullName>Rhomboid protease GlpG homolog</fullName>
    </recommendedName>
</protein>
<evidence type="ECO:0000250" key="1"/>
<evidence type="ECO:0000255" key="2"/>
<evidence type="ECO:0000305" key="3"/>
<reference key="1">
    <citation type="journal article" date="2010" name="PLoS ONE">
        <title>Genome sequence of Cronobacter sakazakii BAA-894 and comparative genomic hybridization analysis with other Cronobacter species.</title>
        <authorList>
            <person name="Kucerova E."/>
            <person name="Clifton S.W."/>
            <person name="Xia X.Q."/>
            <person name="Long F."/>
            <person name="Porwollik S."/>
            <person name="Fulton L."/>
            <person name="Fronick C."/>
            <person name="Minx P."/>
            <person name="Kyung K."/>
            <person name="Warren W."/>
            <person name="Fulton R."/>
            <person name="Feng D."/>
            <person name="Wollam A."/>
            <person name="Shah N."/>
            <person name="Bhonagiri V."/>
            <person name="Nash W.E."/>
            <person name="Hallsworth-Pepin K."/>
            <person name="Wilson R.K."/>
            <person name="McClelland M."/>
            <person name="Forsythe S.J."/>
        </authorList>
    </citation>
    <scope>NUCLEOTIDE SEQUENCE [LARGE SCALE GENOMIC DNA]</scope>
    <source>
        <strain>ATCC BAA-894</strain>
    </source>
</reference>
<keyword id="KW-0997">Cell inner membrane</keyword>
<keyword id="KW-1003">Cell membrane</keyword>
<keyword id="KW-0472">Membrane</keyword>
<keyword id="KW-1185">Reference proteome</keyword>
<keyword id="KW-0812">Transmembrane</keyword>
<keyword id="KW-1133">Transmembrane helix</keyword>
<name>GLPG_CROS8</name>
<sequence length="276" mass="30680">MLMINSFDNPRLAQAFVDYMATQGVILEIQRHDTWDIWLADEAQAERVKAELSYFLAHPGDPRYLSASWQTGQLNAGLRYRSYPFMASVRAHAGPLTLGMMALCVVAYLAMSIIGSPQVAVWLAWPFDPSLKFQLWRYVSPLLLHFSLLSLIFNLLWWWYLAGPLERSVGSGKLLTLTLVTALVGGVIQYQIAGPWFGGLGGVVYALVGYVWLRGEREPESGLYLPRGILVFMLLWLAIGGLGLFGNKTANADLVAGMLIGLAMAMTDTLHARKRK</sequence>
<accession>A7MGE5</accession>